<protein>
    <recommendedName>
        <fullName evidence="2">Purine nucleoside phosphorylase DeoD-type 1</fullName>
        <shortName evidence="2">PNP 1</shortName>
        <ecNumber evidence="2">2.4.2.1</ecNumber>
    </recommendedName>
</protein>
<feature type="chain" id="PRO_0000063159" description="Purine nucleoside phosphorylase DeoD-type 1">
    <location>
        <begin position="1"/>
        <end position="236"/>
    </location>
</feature>
<feature type="active site" description="Proton donor" evidence="2">
    <location>
        <position position="205"/>
    </location>
</feature>
<feature type="binding site" evidence="1">
    <location>
        <position position="5"/>
    </location>
    <ligand>
        <name>a purine D-ribonucleoside</name>
        <dbReference type="ChEBI" id="CHEBI:142355"/>
        <note>ligand shared between dimeric partners</note>
    </ligand>
</feature>
<feature type="binding site" description="in other chain" evidence="1">
    <location>
        <position position="21"/>
    </location>
    <ligand>
        <name>phosphate</name>
        <dbReference type="ChEBI" id="CHEBI:43474"/>
        <note>ligand shared between dimeric partners</note>
    </ligand>
</feature>
<feature type="binding site" description="in other chain" evidence="1">
    <location>
        <position position="25"/>
    </location>
    <ligand>
        <name>phosphate</name>
        <dbReference type="ChEBI" id="CHEBI:43474"/>
        <note>ligand shared between dimeric partners</note>
    </ligand>
</feature>
<feature type="binding site" evidence="1">
    <location>
        <position position="44"/>
    </location>
    <ligand>
        <name>phosphate</name>
        <dbReference type="ChEBI" id="CHEBI:43474"/>
        <note>ligand shared between dimeric partners</note>
    </ligand>
</feature>
<feature type="binding site" description="in other chain" evidence="1">
    <location>
        <begin position="88"/>
        <end position="91"/>
    </location>
    <ligand>
        <name>phosphate</name>
        <dbReference type="ChEBI" id="CHEBI:43474"/>
        <note>ligand shared between dimeric partners</note>
    </ligand>
</feature>
<feature type="binding site" description="in other chain" evidence="1">
    <location>
        <begin position="180"/>
        <end position="182"/>
    </location>
    <ligand>
        <name>a purine D-ribonucleoside</name>
        <dbReference type="ChEBI" id="CHEBI:142355"/>
        <note>ligand shared between dimeric partners</note>
    </ligand>
</feature>
<feature type="binding site" description="in other chain" evidence="1">
    <location>
        <begin position="204"/>
        <end position="205"/>
    </location>
    <ligand>
        <name>a purine D-ribonucleoside</name>
        <dbReference type="ChEBI" id="CHEBI:142355"/>
        <note>ligand shared between dimeric partners</note>
    </ligand>
</feature>
<feature type="site" description="Important for catalytic activity" evidence="2">
    <location>
        <position position="218"/>
    </location>
</feature>
<organism>
    <name type="scientific">Shewanella oneidensis (strain ATCC 700550 / JCM 31522 / CIP 106686 / LMG 19005 / NCIMB 14063 / MR-1)</name>
    <dbReference type="NCBI Taxonomy" id="211586"/>
    <lineage>
        <taxon>Bacteria</taxon>
        <taxon>Pseudomonadati</taxon>
        <taxon>Pseudomonadota</taxon>
        <taxon>Gammaproteobacteria</taxon>
        <taxon>Alteromonadales</taxon>
        <taxon>Shewanellaceae</taxon>
        <taxon>Shewanella</taxon>
    </lineage>
</organism>
<accession>Q8EKK0</accession>
<comment type="function">
    <text evidence="2">Catalyzes the reversible phosphorolytic breakdown of the N-glycosidic bond in the beta-(deoxy)ribonucleoside molecules, with the formation of the corresponding free purine bases and pentose-1-phosphate.</text>
</comment>
<comment type="catalytic activity">
    <reaction evidence="2">
        <text>a purine D-ribonucleoside + phosphate = a purine nucleobase + alpha-D-ribose 1-phosphate</text>
        <dbReference type="Rhea" id="RHEA:19805"/>
        <dbReference type="ChEBI" id="CHEBI:26386"/>
        <dbReference type="ChEBI" id="CHEBI:43474"/>
        <dbReference type="ChEBI" id="CHEBI:57720"/>
        <dbReference type="ChEBI" id="CHEBI:142355"/>
        <dbReference type="EC" id="2.4.2.1"/>
    </reaction>
</comment>
<comment type="catalytic activity">
    <reaction evidence="2">
        <text>a purine 2'-deoxy-D-ribonucleoside + phosphate = a purine nucleobase + 2-deoxy-alpha-D-ribose 1-phosphate</text>
        <dbReference type="Rhea" id="RHEA:36431"/>
        <dbReference type="ChEBI" id="CHEBI:26386"/>
        <dbReference type="ChEBI" id="CHEBI:43474"/>
        <dbReference type="ChEBI" id="CHEBI:57259"/>
        <dbReference type="ChEBI" id="CHEBI:142361"/>
        <dbReference type="EC" id="2.4.2.1"/>
    </reaction>
</comment>
<comment type="subunit">
    <text evidence="2">Homohexamer; trimer of homodimers.</text>
</comment>
<comment type="similarity">
    <text evidence="2">Belongs to the PNP/UDP phosphorylase family.</text>
</comment>
<keyword id="KW-0328">Glycosyltransferase</keyword>
<keyword id="KW-1185">Reference proteome</keyword>
<keyword id="KW-0808">Transferase</keyword>
<reference key="1">
    <citation type="journal article" date="2002" name="Nat. Biotechnol.">
        <title>Genome sequence of the dissimilatory metal ion-reducing bacterium Shewanella oneidensis.</title>
        <authorList>
            <person name="Heidelberg J.F."/>
            <person name="Paulsen I.T."/>
            <person name="Nelson K.E."/>
            <person name="Gaidos E.J."/>
            <person name="Nelson W.C."/>
            <person name="Read T.D."/>
            <person name="Eisen J.A."/>
            <person name="Seshadri R."/>
            <person name="Ward N.L."/>
            <person name="Methe B.A."/>
            <person name="Clayton R.A."/>
            <person name="Meyer T."/>
            <person name="Tsapin A."/>
            <person name="Scott J."/>
            <person name="Beanan M.J."/>
            <person name="Brinkac L.M."/>
            <person name="Daugherty S.C."/>
            <person name="DeBoy R.T."/>
            <person name="Dodson R.J."/>
            <person name="Durkin A.S."/>
            <person name="Haft D.H."/>
            <person name="Kolonay J.F."/>
            <person name="Madupu R."/>
            <person name="Peterson J.D."/>
            <person name="Umayam L.A."/>
            <person name="White O."/>
            <person name="Wolf A.M."/>
            <person name="Vamathevan J.J."/>
            <person name="Weidman J.F."/>
            <person name="Impraim M."/>
            <person name="Lee K."/>
            <person name="Berry K.J."/>
            <person name="Lee C."/>
            <person name="Mueller J."/>
            <person name="Khouri H.M."/>
            <person name="Gill J."/>
            <person name="Utterback T.R."/>
            <person name="McDonald L.A."/>
            <person name="Feldblyum T.V."/>
            <person name="Smith H.O."/>
            <person name="Venter J.C."/>
            <person name="Nealson K.H."/>
            <person name="Fraser C.M."/>
        </authorList>
    </citation>
    <scope>NUCLEOTIDE SEQUENCE [LARGE SCALE GENOMIC DNA]</scope>
    <source>
        <strain>ATCC 700550 / JCM 31522 / CIP 106686 / LMG 19005 / NCIMB 14063 / MR-1</strain>
    </source>
</reference>
<evidence type="ECO:0000250" key="1">
    <source>
        <dbReference type="UniProtKB" id="P50389"/>
    </source>
</evidence>
<evidence type="ECO:0000255" key="2">
    <source>
        <dbReference type="HAMAP-Rule" id="MF_01627"/>
    </source>
</evidence>
<dbReference type="EC" id="2.4.2.1" evidence="2"/>
<dbReference type="EMBL" id="AE014299">
    <property type="protein sequence ID" value="AAN53179.1"/>
    <property type="molecule type" value="Genomic_DNA"/>
</dbReference>
<dbReference type="RefSeq" id="NP_715734.1">
    <property type="nucleotide sequence ID" value="NC_004347.2"/>
</dbReference>
<dbReference type="RefSeq" id="WP_011070503.1">
    <property type="nucleotide sequence ID" value="NC_004347.2"/>
</dbReference>
<dbReference type="SMR" id="Q8EKK0"/>
<dbReference type="STRING" id="211586.SO_0092"/>
<dbReference type="PaxDb" id="211586-SO_0092"/>
<dbReference type="KEGG" id="son:SO_0092"/>
<dbReference type="PATRIC" id="fig|211586.12.peg.93"/>
<dbReference type="eggNOG" id="COG0813">
    <property type="taxonomic scope" value="Bacteria"/>
</dbReference>
<dbReference type="HOGENOM" id="CLU_068457_2_0_6"/>
<dbReference type="OrthoDB" id="9782889at2"/>
<dbReference type="PhylomeDB" id="Q8EKK0"/>
<dbReference type="BioCyc" id="SONE211586:G1GMP-91-MONOMER"/>
<dbReference type="Proteomes" id="UP000008186">
    <property type="component" value="Chromosome"/>
</dbReference>
<dbReference type="GO" id="GO:0005829">
    <property type="term" value="C:cytosol"/>
    <property type="evidence" value="ECO:0000318"/>
    <property type="project" value="GO_Central"/>
</dbReference>
<dbReference type="GO" id="GO:0004731">
    <property type="term" value="F:purine-nucleoside phosphorylase activity"/>
    <property type="evidence" value="ECO:0000318"/>
    <property type="project" value="GO_Central"/>
</dbReference>
<dbReference type="GO" id="GO:0006152">
    <property type="term" value="P:purine nucleoside catabolic process"/>
    <property type="evidence" value="ECO:0000318"/>
    <property type="project" value="GO_Central"/>
</dbReference>
<dbReference type="CDD" id="cd09006">
    <property type="entry name" value="PNP_EcPNPI-like"/>
    <property type="match status" value="1"/>
</dbReference>
<dbReference type="Gene3D" id="3.40.50.1580">
    <property type="entry name" value="Nucleoside phosphorylase domain"/>
    <property type="match status" value="1"/>
</dbReference>
<dbReference type="HAMAP" id="MF_01627">
    <property type="entry name" value="Pur_nucleosid_phosp"/>
    <property type="match status" value="1"/>
</dbReference>
<dbReference type="InterPro" id="IPR004402">
    <property type="entry name" value="DeoD-type"/>
</dbReference>
<dbReference type="InterPro" id="IPR018016">
    <property type="entry name" value="Nucleoside_phosphorylase_CS"/>
</dbReference>
<dbReference type="InterPro" id="IPR000845">
    <property type="entry name" value="Nucleoside_phosphorylase_d"/>
</dbReference>
<dbReference type="InterPro" id="IPR035994">
    <property type="entry name" value="Nucleoside_phosphorylase_sf"/>
</dbReference>
<dbReference type="NCBIfam" id="TIGR00107">
    <property type="entry name" value="deoD"/>
    <property type="match status" value="1"/>
</dbReference>
<dbReference type="NCBIfam" id="NF004489">
    <property type="entry name" value="PRK05819.1"/>
    <property type="match status" value="1"/>
</dbReference>
<dbReference type="NCBIfam" id="NF009914">
    <property type="entry name" value="PRK13374.1"/>
    <property type="match status" value="1"/>
</dbReference>
<dbReference type="PANTHER" id="PTHR43691:SF11">
    <property type="entry name" value="FI09636P-RELATED"/>
    <property type="match status" value="1"/>
</dbReference>
<dbReference type="PANTHER" id="PTHR43691">
    <property type="entry name" value="URIDINE PHOSPHORYLASE"/>
    <property type="match status" value="1"/>
</dbReference>
<dbReference type="Pfam" id="PF01048">
    <property type="entry name" value="PNP_UDP_1"/>
    <property type="match status" value="1"/>
</dbReference>
<dbReference type="SUPFAM" id="SSF53167">
    <property type="entry name" value="Purine and uridine phosphorylases"/>
    <property type="match status" value="1"/>
</dbReference>
<dbReference type="PROSITE" id="PS01232">
    <property type="entry name" value="PNP_UDP_1"/>
    <property type="match status" value="1"/>
</dbReference>
<sequence>MSTPHINANPGDFAKTIIMSGDPLRAKLIAETYLEDVKEVTNVRGILGFTGKYKSKDISIMGHGMGAPSASIYFHELMATYGVKNFIRVGSCGAISDNIHLKDLIVAMGASTDSKINRIRFLDHDLAAIANYDLLQACIEVLKTTTVNYKVGNVFSSDLFYRPNENDYTLMAKYGVLGVEMEVNALYALAAEHQCRALALCTVTDHIVQHEHLTADERRTDLHEMVKVALETAIKI</sequence>
<name>DEOD1_SHEON</name>
<gene>
    <name evidence="2" type="primary">deoD1</name>
    <name type="ordered locus">SO_0092</name>
</gene>
<proteinExistence type="inferred from homology"/>